<evidence type="ECO:0000255" key="1">
    <source>
        <dbReference type="PROSITE-ProRule" id="PRU00125"/>
    </source>
</evidence>
<evidence type="ECO:0000269" key="2">
    <source>
    </source>
</evidence>
<evidence type="ECO:0000305" key="3"/>
<proteinExistence type="evidence at transcript level"/>
<gene>
    <name type="primary">pin-2</name>
    <name type="ORF">F07C6.1</name>
</gene>
<comment type="subcellular location">
    <subcellularLocation>
        <location evidence="2">Cytoplasm</location>
    </subcellularLocation>
    <subcellularLocation>
        <location evidence="2">Nucleus</location>
    </subcellularLocation>
</comment>
<comment type="alternative products">
    <event type="alternative splicing"/>
    <isoform>
        <id>Q19157-1</id>
        <name>a</name>
        <sequence type="displayed"/>
    </isoform>
    <isoform>
        <id>Q19157-2</id>
        <name>b</name>
        <sequence type="described" ref="VSP_044155"/>
    </isoform>
</comment>
<comment type="tissue specificity">
    <text evidence="2">Expressed in neurons and intestine.</text>
</comment>
<sequence>MMTNAAQITKQRNSGKRHRACERCREQFELNEPYFLLGASSWHMRCFLCAQCMDPLVGTTYFQFENRIYCEHDFKTLYAPVCAKCNEFVIGQVVHSSNNSYHLACFTCDECNVHLNSQIAYRYQGTILCFLCNQKKPKMRIYNCNKCKQHVDNSDLLTYQENPYHAYHFKCTTCKKVLESDARTIKDDLFCPRCFDFKCEVCFDCKKVIDPQVEQSIFTMNKHWHTDHFRCATCARPFFGHEHYEKNGKAYCRDDFLELIGHHCFICDRNVGGGMVHVFGKAFCPECYRCRGCDKVLHYKDKVMELDLMPLCKKCLGNKTFQKALKYKSL</sequence>
<accession>Q19157</accession>
<accession>H9G2V0</accession>
<accession>H9G2V1</accession>
<reference key="1">
    <citation type="journal article" date="1998" name="Science">
        <title>Genome sequence of the nematode C. elegans: a platform for investigating biology.</title>
        <authorList>
            <consortium name="The C. elegans sequencing consortium"/>
        </authorList>
    </citation>
    <scope>NUCLEOTIDE SEQUENCE [LARGE SCALE GENOMIC DNA]</scope>
    <scope>ALTERNATIVE SPLICING</scope>
    <source>
        <strain>Bristol N2</strain>
    </source>
</reference>
<reference key="2">
    <citation type="journal article" date="1999" name="J. Cell Biol.">
        <title>A conserved LIM protein that affects muscular adherens junction integrity and mechanosensory function in Caenorhabditis elegans.</title>
        <authorList>
            <person name="Hobert O."/>
            <person name="Moerman D.G."/>
            <person name="Clark K.A."/>
            <person name="Beckerle M.C."/>
            <person name="Ruvkun G."/>
        </authorList>
    </citation>
    <scope>TISSUE SPECIFICITY</scope>
    <scope>SUBCELLULAR LOCATION</scope>
</reference>
<protein>
    <recommendedName>
        <fullName>LIM domain-containing protein pin-2</fullName>
    </recommendedName>
</protein>
<feature type="chain" id="PRO_0000075887" description="LIM domain-containing protein pin-2">
    <location>
        <begin position="1"/>
        <end position="330"/>
    </location>
</feature>
<feature type="domain" description="LIM zinc-binding 1" evidence="1">
    <location>
        <begin position="21"/>
        <end position="73"/>
    </location>
</feature>
<feature type="domain" description="LIM zinc-binding 2" evidence="1">
    <location>
        <begin position="82"/>
        <end position="132"/>
    </location>
</feature>
<feature type="domain" description="LIM zinc-binding 3" evidence="1">
    <location>
        <begin position="144"/>
        <end position="194"/>
    </location>
</feature>
<feature type="domain" description="LIM zinc-binding 4" evidence="1">
    <location>
        <begin position="202"/>
        <end position="255"/>
    </location>
</feature>
<feature type="domain" description="LIM zinc-binding 5" evidence="1">
    <location>
        <begin position="264"/>
        <end position="315"/>
    </location>
</feature>
<feature type="splice variant" id="VSP_044155" description="In isoform b." evidence="3">
    <location>
        <begin position="1"/>
        <end position="274"/>
    </location>
</feature>
<keyword id="KW-0025">Alternative splicing</keyword>
<keyword id="KW-0963">Cytoplasm</keyword>
<keyword id="KW-0440">LIM domain</keyword>
<keyword id="KW-0479">Metal-binding</keyword>
<keyword id="KW-0539">Nucleus</keyword>
<keyword id="KW-1185">Reference proteome</keyword>
<keyword id="KW-0677">Repeat</keyword>
<keyword id="KW-0862">Zinc</keyword>
<dbReference type="EMBL" id="Z69659">
    <property type="protein sequence ID" value="CCG28057.1"/>
    <property type="molecule type" value="Genomic_DNA"/>
</dbReference>
<dbReference type="EMBL" id="Z69659">
    <property type="protein sequence ID" value="CCG28058.1"/>
    <property type="molecule type" value="Genomic_DNA"/>
</dbReference>
<dbReference type="PIR" id="T20546">
    <property type="entry name" value="T20546"/>
</dbReference>
<dbReference type="RefSeq" id="NP_001255672.1">
    <molecule id="Q19157-1"/>
    <property type="nucleotide sequence ID" value="NM_001268743.3"/>
</dbReference>
<dbReference type="RefSeq" id="NP_001255673.1">
    <molecule id="Q19157-2"/>
    <property type="nucleotide sequence ID" value="NM_001268744.3"/>
</dbReference>
<dbReference type="SMR" id="Q19157"/>
<dbReference type="STRING" id="6239.F07C6.1a.1"/>
<dbReference type="PaxDb" id="6239-F07C6.1a"/>
<dbReference type="PeptideAtlas" id="Q19157"/>
<dbReference type="EnsemblMetazoa" id="F07C6.1a.1">
    <molecule id="Q19157-1"/>
    <property type="protein sequence ID" value="F07C6.1a.1"/>
    <property type="gene ID" value="WBGene00004030"/>
</dbReference>
<dbReference type="EnsemblMetazoa" id="F07C6.1b.1">
    <molecule id="Q19157-2"/>
    <property type="protein sequence ID" value="F07C6.1b.1"/>
    <property type="gene ID" value="WBGene00004030"/>
</dbReference>
<dbReference type="GeneID" id="178234"/>
<dbReference type="KEGG" id="cel:CELE_F07C6.1"/>
<dbReference type="UCSC" id="F07C6.1">
    <molecule id="Q19157-1"/>
    <property type="organism name" value="c. elegans"/>
</dbReference>
<dbReference type="AGR" id="WB:WBGene00004030"/>
<dbReference type="CTD" id="178234"/>
<dbReference type="WormBase" id="F07C6.1a">
    <molecule id="Q19157-1"/>
    <property type="protein sequence ID" value="CE47311"/>
    <property type="gene ID" value="WBGene00004030"/>
    <property type="gene designation" value="pin-2"/>
</dbReference>
<dbReference type="WormBase" id="F07C6.1b">
    <molecule id="Q19157-2"/>
    <property type="protein sequence ID" value="CE47192"/>
    <property type="gene ID" value="WBGene00004030"/>
    <property type="gene designation" value="pin-2"/>
</dbReference>
<dbReference type="eggNOG" id="KOG2272">
    <property type="taxonomic scope" value="Eukaryota"/>
</dbReference>
<dbReference type="GeneTree" id="ENSGT00940000153518"/>
<dbReference type="HOGENOM" id="CLU_001357_0_0_1"/>
<dbReference type="InParanoid" id="Q19157"/>
<dbReference type="OMA" id="EGRIYCE"/>
<dbReference type="OrthoDB" id="20689at2759"/>
<dbReference type="PhylomeDB" id="Q19157"/>
<dbReference type="Reactome" id="R-CEL-446353">
    <property type="pathway name" value="Cell-extracellular matrix interactions"/>
</dbReference>
<dbReference type="PRO" id="PR:Q19157"/>
<dbReference type="Proteomes" id="UP000001940">
    <property type="component" value="Chromosome IV"/>
</dbReference>
<dbReference type="Bgee" id="WBGene00004030">
    <property type="expression patterns" value="Expressed in embryo and 4 other cell types or tissues"/>
</dbReference>
<dbReference type="GO" id="GO:0030424">
    <property type="term" value="C:axon"/>
    <property type="evidence" value="ECO:0000314"/>
    <property type="project" value="WormBase"/>
</dbReference>
<dbReference type="GO" id="GO:0005911">
    <property type="term" value="C:cell-cell junction"/>
    <property type="evidence" value="ECO:0000318"/>
    <property type="project" value="GO_Central"/>
</dbReference>
<dbReference type="GO" id="GO:0005737">
    <property type="term" value="C:cytoplasm"/>
    <property type="evidence" value="ECO:0000314"/>
    <property type="project" value="WormBase"/>
</dbReference>
<dbReference type="GO" id="GO:0005925">
    <property type="term" value="C:focal adhesion"/>
    <property type="evidence" value="ECO:0000318"/>
    <property type="project" value="GO_Central"/>
</dbReference>
<dbReference type="GO" id="GO:0005634">
    <property type="term" value="C:nucleus"/>
    <property type="evidence" value="ECO:0000314"/>
    <property type="project" value="WormBase"/>
</dbReference>
<dbReference type="GO" id="GO:0043196">
    <property type="term" value="C:varicosity"/>
    <property type="evidence" value="ECO:0000314"/>
    <property type="project" value="WormBase"/>
</dbReference>
<dbReference type="GO" id="GO:0046872">
    <property type="term" value="F:metal ion binding"/>
    <property type="evidence" value="ECO:0007669"/>
    <property type="project" value="UniProtKB-KW"/>
</dbReference>
<dbReference type="GO" id="GO:0098609">
    <property type="term" value="P:cell-cell adhesion"/>
    <property type="evidence" value="ECO:0000318"/>
    <property type="project" value="GO_Central"/>
</dbReference>
<dbReference type="GO" id="GO:0045216">
    <property type="term" value="P:cell-cell junction organization"/>
    <property type="evidence" value="ECO:0000318"/>
    <property type="project" value="GO_Central"/>
</dbReference>
<dbReference type="GO" id="GO:2001046">
    <property type="term" value="P:positive regulation of integrin-mediated signaling pathway"/>
    <property type="evidence" value="ECO:0000318"/>
    <property type="project" value="GO_Central"/>
</dbReference>
<dbReference type="GO" id="GO:1900026">
    <property type="term" value="P:positive regulation of substrate adhesion-dependent cell spreading"/>
    <property type="evidence" value="ECO:0000318"/>
    <property type="project" value="GO_Central"/>
</dbReference>
<dbReference type="CDD" id="cd09331">
    <property type="entry name" value="LIM1_PINCH"/>
    <property type="match status" value="1"/>
</dbReference>
<dbReference type="CDD" id="cd09334">
    <property type="entry name" value="LIM4_PINCH"/>
    <property type="match status" value="1"/>
</dbReference>
<dbReference type="FunFam" id="2.10.110.10:FF:000017">
    <property type="entry name" value="Lim and senescent cell antigen-like-containing"/>
    <property type="match status" value="1"/>
</dbReference>
<dbReference type="FunFam" id="2.10.110.10:FF:000203">
    <property type="entry name" value="LIM domain-containing protein"/>
    <property type="match status" value="1"/>
</dbReference>
<dbReference type="FunFam" id="2.10.110.10:FF:000170">
    <property type="entry name" value="LIM domain-containing protein B"/>
    <property type="match status" value="1"/>
</dbReference>
<dbReference type="Gene3D" id="2.10.110.10">
    <property type="entry name" value="Cysteine Rich Protein"/>
    <property type="match status" value="5"/>
</dbReference>
<dbReference type="InterPro" id="IPR047944">
    <property type="entry name" value="LIMS1/2-like_LIM1"/>
</dbReference>
<dbReference type="InterPro" id="IPR017351">
    <property type="entry name" value="PINCH-1-4-like"/>
</dbReference>
<dbReference type="InterPro" id="IPR047946">
    <property type="entry name" value="PINCH-1/2-like"/>
</dbReference>
<dbReference type="InterPro" id="IPR001781">
    <property type="entry name" value="Znf_LIM"/>
</dbReference>
<dbReference type="PANTHER" id="PTHR24210">
    <property type="entry name" value="LIM DOMAIN-CONTAINING PROTEIN"/>
    <property type="match status" value="1"/>
</dbReference>
<dbReference type="PANTHER" id="PTHR24210:SF7">
    <property type="entry name" value="LIM DOMAIN-CONTAINING PROTEIN PIN-2"/>
    <property type="match status" value="1"/>
</dbReference>
<dbReference type="Pfam" id="PF00412">
    <property type="entry name" value="LIM"/>
    <property type="match status" value="4"/>
</dbReference>
<dbReference type="PIRSF" id="PIRSF038003">
    <property type="entry name" value="PINCH"/>
    <property type="match status" value="1"/>
</dbReference>
<dbReference type="SMART" id="SM00132">
    <property type="entry name" value="LIM"/>
    <property type="match status" value="5"/>
</dbReference>
<dbReference type="SUPFAM" id="SSF57716">
    <property type="entry name" value="Glucocorticoid receptor-like (DNA-binding domain)"/>
    <property type="match status" value="4"/>
</dbReference>
<dbReference type="PROSITE" id="PS00478">
    <property type="entry name" value="LIM_DOMAIN_1"/>
    <property type="match status" value="4"/>
</dbReference>
<dbReference type="PROSITE" id="PS50023">
    <property type="entry name" value="LIM_DOMAIN_2"/>
    <property type="match status" value="5"/>
</dbReference>
<name>PIN2_CAEEL</name>
<organism>
    <name type="scientific">Caenorhabditis elegans</name>
    <dbReference type="NCBI Taxonomy" id="6239"/>
    <lineage>
        <taxon>Eukaryota</taxon>
        <taxon>Metazoa</taxon>
        <taxon>Ecdysozoa</taxon>
        <taxon>Nematoda</taxon>
        <taxon>Chromadorea</taxon>
        <taxon>Rhabditida</taxon>
        <taxon>Rhabditina</taxon>
        <taxon>Rhabditomorpha</taxon>
        <taxon>Rhabditoidea</taxon>
        <taxon>Rhabditidae</taxon>
        <taxon>Peloderinae</taxon>
        <taxon>Caenorhabditis</taxon>
    </lineage>
</organism>